<evidence type="ECO:0000255" key="1">
    <source>
        <dbReference type="HAMAP-Rule" id="MF_01685"/>
    </source>
</evidence>
<name>FENR_BURVG</name>
<proteinExistence type="inferred from homology"/>
<accession>A4JS50</accession>
<protein>
    <recommendedName>
        <fullName evidence="1">Ferredoxin--NADP reductase</fullName>
        <shortName evidence="1">FNR</shortName>
        <shortName evidence="1">Fd-NADP(+) reductase</shortName>
        <ecNumber evidence="1">1.18.1.2</ecNumber>
    </recommendedName>
</protein>
<sequence length="351" mass="37581">MTSSENSSVSNPLRTDVLIVGAGPVGLFAAFEAGVIGLSCQIVDGIERPGGQCIELYPDKPIYDIPAVPSCTARDLVDRLVEQCRPFNPPMHLGQRIERLDPLEGGRWLARTDKGHTFDAAAILIAAGNGAFVPQRLALDEAARLEGRYVHYRVSDMNGLAGTNVVVAGGGDSALDWALALRSVARHVTLVHRRSGFSATDSSVARLRQAVAAGEMDFVVGTIARLNSPVGPLESIEVRQIGGSVCLDADQLLVLYGLVADLGPIVNWGIAIQAGRIVVDTSYYESSRPGIFAAGDIACYPNKQKLILCGFHEASLALRKAYNYAFPDKKRVHVHSSYDAKLAERVAAVHP</sequence>
<gene>
    <name type="ordered locus">Bcep1808_6193</name>
</gene>
<reference key="1">
    <citation type="submission" date="2007-03" db="EMBL/GenBank/DDBJ databases">
        <title>Complete sequence of chromosome 3 of Burkholderia vietnamiensis G4.</title>
        <authorList>
            <consortium name="US DOE Joint Genome Institute"/>
            <person name="Copeland A."/>
            <person name="Lucas S."/>
            <person name="Lapidus A."/>
            <person name="Barry K."/>
            <person name="Detter J.C."/>
            <person name="Glavina del Rio T."/>
            <person name="Hammon N."/>
            <person name="Israni S."/>
            <person name="Dalin E."/>
            <person name="Tice H."/>
            <person name="Pitluck S."/>
            <person name="Chain P."/>
            <person name="Malfatti S."/>
            <person name="Shin M."/>
            <person name="Vergez L."/>
            <person name="Schmutz J."/>
            <person name="Larimer F."/>
            <person name="Land M."/>
            <person name="Hauser L."/>
            <person name="Kyrpides N."/>
            <person name="Tiedje J."/>
            <person name="Richardson P."/>
        </authorList>
    </citation>
    <scope>NUCLEOTIDE SEQUENCE [LARGE SCALE GENOMIC DNA]</scope>
    <source>
        <strain>G4 / LMG 22486</strain>
    </source>
</reference>
<dbReference type="EC" id="1.18.1.2" evidence="1"/>
<dbReference type="EMBL" id="CP000616">
    <property type="protein sequence ID" value="ABO59103.1"/>
    <property type="molecule type" value="Genomic_DNA"/>
</dbReference>
<dbReference type="SMR" id="A4JS50"/>
<dbReference type="KEGG" id="bvi:Bcep1808_6193"/>
<dbReference type="eggNOG" id="COG0492">
    <property type="taxonomic scope" value="Bacteria"/>
</dbReference>
<dbReference type="HOGENOM" id="CLU_031864_5_5_4"/>
<dbReference type="Proteomes" id="UP000002287">
    <property type="component" value="Chromosome 3"/>
</dbReference>
<dbReference type="GO" id="GO:0004324">
    <property type="term" value="F:ferredoxin-NADP+ reductase activity"/>
    <property type="evidence" value="ECO:0007669"/>
    <property type="project" value="UniProtKB-UniRule"/>
</dbReference>
<dbReference type="GO" id="GO:0050660">
    <property type="term" value="F:flavin adenine dinucleotide binding"/>
    <property type="evidence" value="ECO:0007669"/>
    <property type="project" value="UniProtKB-UniRule"/>
</dbReference>
<dbReference type="GO" id="GO:0050661">
    <property type="term" value="F:NADP binding"/>
    <property type="evidence" value="ECO:0007669"/>
    <property type="project" value="UniProtKB-UniRule"/>
</dbReference>
<dbReference type="Gene3D" id="3.50.50.60">
    <property type="entry name" value="FAD/NAD(P)-binding domain"/>
    <property type="match status" value="2"/>
</dbReference>
<dbReference type="HAMAP" id="MF_01685">
    <property type="entry name" value="FENR2"/>
    <property type="match status" value="1"/>
</dbReference>
<dbReference type="InterPro" id="IPR036188">
    <property type="entry name" value="FAD/NAD-bd_sf"/>
</dbReference>
<dbReference type="InterPro" id="IPR023753">
    <property type="entry name" value="FAD/NAD-binding_dom"/>
</dbReference>
<dbReference type="InterPro" id="IPR022890">
    <property type="entry name" value="Fd--NADP_Rdtase_type_2"/>
</dbReference>
<dbReference type="InterPro" id="IPR050097">
    <property type="entry name" value="Ferredoxin-NADP_redctase_2"/>
</dbReference>
<dbReference type="PANTHER" id="PTHR48105">
    <property type="entry name" value="THIOREDOXIN REDUCTASE 1-RELATED-RELATED"/>
    <property type="match status" value="1"/>
</dbReference>
<dbReference type="Pfam" id="PF07992">
    <property type="entry name" value="Pyr_redox_2"/>
    <property type="match status" value="1"/>
</dbReference>
<dbReference type="PRINTS" id="PR00368">
    <property type="entry name" value="FADPNR"/>
</dbReference>
<dbReference type="PRINTS" id="PR00469">
    <property type="entry name" value="PNDRDTASEII"/>
</dbReference>
<dbReference type="SUPFAM" id="SSF51905">
    <property type="entry name" value="FAD/NAD(P)-binding domain"/>
    <property type="match status" value="2"/>
</dbReference>
<organism>
    <name type="scientific">Burkholderia vietnamiensis (strain G4 / LMG 22486)</name>
    <name type="common">Burkholderia cepacia (strain R1808)</name>
    <dbReference type="NCBI Taxonomy" id="269482"/>
    <lineage>
        <taxon>Bacteria</taxon>
        <taxon>Pseudomonadati</taxon>
        <taxon>Pseudomonadota</taxon>
        <taxon>Betaproteobacteria</taxon>
        <taxon>Burkholderiales</taxon>
        <taxon>Burkholderiaceae</taxon>
        <taxon>Burkholderia</taxon>
        <taxon>Burkholderia cepacia complex</taxon>
    </lineage>
</organism>
<feature type="chain" id="PRO_0000364814" description="Ferredoxin--NADP reductase">
    <location>
        <begin position="1"/>
        <end position="351"/>
    </location>
</feature>
<feature type="binding site" evidence="1">
    <location>
        <position position="44"/>
    </location>
    <ligand>
        <name>FAD</name>
        <dbReference type="ChEBI" id="CHEBI:57692"/>
    </ligand>
</feature>
<feature type="binding site" evidence="1">
    <location>
        <position position="52"/>
    </location>
    <ligand>
        <name>FAD</name>
        <dbReference type="ChEBI" id="CHEBI:57692"/>
    </ligand>
</feature>
<feature type="binding site" evidence="1">
    <location>
        <position position="57"/>
    </location>
    <ligand>
        <name>FAD</name>
        <dbReference type="ChEBI" id="CHEBI:57692"/>
    </ligand>
</feature>
<feature type="binding site" evidence="1">
    <location>
        <position position="97"/>
    </location>
    <ligand>
        <name>FAD</name>
        <dbReference type="ChEBI" id="CHEBI:57692"/>
    </ligand>
</feature>
<feature type="binding site" evidence="1">
    <location>
        <position position="132"/>
    </location>
    <ligand>
        <name>FAD</name>
        <dbReference type="ChEBI" id="CHEBI:57692"/>
    </ligand>
</feature>
<feature type="binding site" evidence="1">
    <location>
        <position position="296"/>
    </location>
    <ligand>
        <name>FAD</name>
        <dbReference type="ChEBI" id="CHEBI:57692"/>
    </ligand>
</feature>
<feature type="binding site" evidence="1">
    <location>
        <position position="337"/>
    </location>
    <ligand>
        <name>FAD</name>
        <dbReference type="ChEBI" id="CHEBI:57692"/>
    </ligand>
</feature>
<comment type="catalytic activity">
    <reaction evidence="1">
        <text>2 reduced [2Fe-2S]-[ferredoxin] + NADP(+) + H(+) = 2 oxidized [2Fe-2S]-[ferredoxin] + NADPH</text>
        <dbReference type="Rhea" id="RHEA:20125"/>
        <dbReference type="Rhea" id="RHEA-COMP:10000"/>
        <dbReference type="Rhea" id="RHEA-COMP:10001"/>
        <dbReference type="ChEBI" id="CHEBI:15378"/>
        <dbReference type="ChEBI" id="CHEBI:33737"/>
        <dbReference type="ChEBI" id="CHEBI:33738"/>
        <dbReference type="ChEBI" id="CHEBI:57783"/>
        <dbReference type="ChEBI" id="CHEBI:58349"/>
        <dbReference type="EC" id="1.18.1.2"/>
    </reaction>
</comment>
<comment type="cofactor">
    <cofactor evidence="1">
        <name>FAD</name>
        <dbReference type="ChEBI" id="CHEBI:57692"/>
    </cofactor>
    <text evidence="1">Binds 1 FAD per subunit.</text>
</comment>
<comment type="subunit">
    <text evidence="1">Homodimer.</text>
</comment>
<comment type="similarity">
    <text evidence="1">Belongs to the ferredoxin--NADP reductase type 2 family.</text>
</comment>
<keyword id="KW-0274">FAD</keyword>
<keyword id="KW-0285">Flavoprotein</keyword>
<keyword id="KW-0521">NADP</keyword>
<keyword id="KW-0560">Oxidoreductase</keyword>